<evidence type="ECO:0000255" key="1">
    <source>
        <dbReference type="HAMAP-Rule" id="MF_00602"/>
    </source>
</evidence>
<name>MCSB_LISMC</name>
<sequence length="340" mass="38841">MNVFEPRLSSWLENAGDDDDVVLSSRIRLARNLKDEQFPVYEQKEEIVDNIAEVFDDNFTLIKMNQISLLQKALLVEKHLISPYMMNKSEYGAVLLNEEENVSIMLNEEDHLRIQCMTPGLRLFDALEAALQIDGYVEEKLSYAFDKEFGYLTSCVTNIGTGMRASVMVHLPGLVTTKRIKSVIEAIRSLGFVVRGIYGEGSMPASNIFQVSNQVTLGKTETEIVEDLTQVMEQIIMQERVARTTLKQKFHIALEDRVFRSYGLLMNCRIISMKEASDAISDIRLGVELGFFEHISRQKMNELVLFSQPAFLRREAGRDMDELEEKVIRAKVIREILGDK</sequence>
<proteinExistence type="inferred from homology"/>
<organism>
    <name type="scientific">Listeria monocytogenes serotype 4b (strain CLIP80459)</name>
    <dbReference type="NCBI Taxonomy" id="568819"/>
    <lineage>
        <taxon>Bacteria</taxon>
        <taxon>Bacillati</taxon>
        <taxon>Bacillota</taxon>
        <taxon>Bacilli</taxon>
        <taxon>Bacillales</taxon>
        <taxon>Listeriaceae</taxon>
        <taxon>Listeria</taxon>
    </lineage>
</organism>
<feature type="chain" id="PRO_1000212219" description="Protein-arginine kinase">
    <location>
        <begin position="1"/>
        <end position="340"/>
    </location>
</feature>
<feature type="domain" description="Phosphagen kinase C-terminal" evidence="1">
    <location>
        <begin position="21"/>
        <end position="242"/>
    </location>
</feature>
<feature type="binding site" evidence="1">
    <location>
        <begin position="24"/>
        <end position="28"/>
    </location>
    <ligand>
        <name>ATP</name>
        <dbReference type="ChEBI" id="CHEBI:30616"/>
    </ligand>
</feature>
<feature type="binding site" evidence="1">
    <location>
        <position position="79"/>
    </location>
    <ligand>
        <name>ATP</name>
        <dbReference type="ChEBI" id="CHEBI:30616"/>
    </ligand>
</feature>
<feature type="binding site" evidence="1">
    <location>
        <position position="113"/>
    </location>
    <ligand>
        <name>ATP</name>
        <dbReference type="ChEBI" id="CHEBI:30616"/>
    </ligand>
</feature>
<feature type="binding site" evidence="1">
    <location>
        <begin position="164"/>
        <end position="168"/>
    </location>
    <ligand>
        <name>ATP</name>
        <dbReference type="ChEBI" id="CHEBI:30616"/>
    </ligand>
</feature>
<feature type="binding site" evidence="1">
    <location>
        <begin position="195"/>
        <end position="200"/>
    </location>
    <ligand>
        <name>ATP</name>
        <dbReference type="ChEBI" id="CHEBI:30616"/>
    </ligand>
</feature>
<protein>
    <recommendedName>
        <fullName evidence="1">Protein-arginine kinase</fullName>
        <ecNumber evidence="1">2.7.14.1</ecNumber>
    </recommendedName>
</protein>
<dbReference type="EC" id="2.7.14.1" evidence="1"/>
<dbReference type="EMBL" id="FM242711">
    <property type="protein sequence ID" value="CAS04019.1"/>
    <property type="molecule type" value="Genomic_DNA"/>
</dbReference>
<dbReference type="RefSeq" id="WP_003726423.1">
    <property type="nucleotide sequence ID" value="NC_012488.1"/>
</dbReference>
<dbReference type="SMR" id="C1KYG4"/>
<dbReference type="KEGG" id="lmc:Lm4b_00251"/>
<dbReference type="HOGENOM" id="CLU_066591_1_0_9"/>
<dbReference type="GO" id="GO:0005615">
    <property type="term" value="C:extracellular space"/>
    <property type="evidence" value="ECO:0007669"/>
    <property type="project" value="TreeGrafter"/>
</dbReference>
<dbReference type="GO" id="GO:0005524">
    <property type="term" value="F:ATP binding"/>
    <property type="evidence" value="ECO:0007669"/>
    <property type="project" value="UniProtKB-KW"/>
</dbReference>
<dbReference type="GO" id="GO:0004111">
    <property type="term" value="F:creatine kinase activity"/>
    <property type="evidence" value="ECO:0007669"/>
    <property type="project" value="InterPro"/>
</dbReference>
<dbReference type="GO" id="GO:0004672">
    <property type="term" value="F:protein kinase activity"/>
    <property type="evidence" value="ECO:0007669"/>
    <property type="project" value="UniProtKB-UniRule"/>
</dbReference>
<dbReference type="GO" id="GO:0046314">
    <property type="term" value="P:phosphocreatine biosynthetic process"/>
    <property type="evidence" value="ECO:0007669"/>
    <property type="project" value="InterPro"/>
</dbReference>
<dbReference type="CDD" id="cd07930">
    <property type="entry name" value="bacterial_phosphagen_kinase"/>
    <property type="match status" value="1"/>
</dbReference>
<dbReference type="FunFam" id="3.30.590.10:FF:000007">
    <property type="entry name" value="Protein-arginine kinase"/>
    <property type="match status" value="1"/>
</dbReference>
<dbReference type="Gene3D" id="3.30.590.10">
    <property type="entry name" value="Glutamine synthetase/guanido kinase, catalytic domain"/>
    <property type="match status" value="1"/>
</dbReference>
<dbReference type="HAMAP" id="MF_00602">
    <property type="entry name" value="Prot_Arg_kinase"/>
    <property type="match status" value="1"/>
</dbReference>
<dbReference type="InterPro" id="IPR023660">
    <property type="entry name" value="Arg_Kinase"/>
</dbReference>
<dbReference type="InterPro" id="IPR000749">
    <property type="entry name" value="ATP-guanido_PTrfase"/>
</dbReference>
<dbReference type="InterPro" id="IPR022414">
    <property type="entry name" value="ATP-guanido_PTrfase_cat"/>
</dbReference>
<dbReference type="InterPro" id="IPR014746">
    <property type="entry name" value="Gln_synth/guanido_kin_cat_dom"/>
</dbReference>
<dbReference type="NCBIfam" id="NF002192">
    <property type="entry name" value="PRK01059.1-2"/>
    <property type="match status" value="1"/>
</dbReference>
<dbReference type="NCBIfam" id="NF002194">
    <property type="entry name" value="PRK01059.1-4"/>
    <property type="match status" value="1"/>
</dbReference>
<dbReference type="PANTHER" id="PTHR11547:SF38">
    <property type="entry name" value="ARGININE KINASE 1-RELATED"/>
    <property type="match status" value="1"/>
</dbReference>
<dbReference type="PANTHER" id="PTHR11547">
    <property type="entry name" value="ARGININE OR CREATINE KINASE"/>
    <property type="match status" value="1"/>
</dbReference>
<dbReference type="Pfam" id="PF00217">
    <property type="entry name" value="ATP-gua_Ptrans"/>
    <property type="match status" value="1"/>
</dbReference>
<dbReference type="SUPFAM" id="SSF55931">
    <property type="entry name" value="Glutamine synthetase/guanido kinase"/>
    <property type="match status" value="1"/>
</dbReference>
<dbReference type="PROSITE" id="PS51510">
    <property type="entry name" value="PHOSPHAGEN_KINASE_C"/>
    <property type="match status" value="1"/>
</dbReference>
<reference key="1">
    <citation type="journal article" date="2012" name="BMC Genomics">
        <title>Comparative genomics and transcriptomics of lineages I, II, and III strains of Listeria monocytogenes.</title>
        <authorList>
            <person name="Hain T."/>
            <person name="Ghai R."/>
            <person name="Billion A."/>
            <person name="Kuenne C.T."/>
            <person name="Steinweg C."/>
            <person name="Izar B."/>
            <person name="Mohamed W."/>
            <person name="Mraheil M."/>
            <person name="Domann E."/>
            <person name="Schaffrath S."/>
            <person name="Karst U."/>
            <person name="Goesmann A."/>
            <person name="Oehm S."/>
            <person name="Puhler A."/>
            <person name="Merkl R."/>
            <person name="Vorwerk S."/>
            <person name="Glaser P."/>
            <person name="Garrido P."/>
            <person name="Rusniok C."/>
            <person name="Buchrieser C."/>
            <person name="Goebel W."/>
            <person name="Chakraborty T."/>
        </authorList>
    </citation>
    <scope>NUCLEOTIDE SEQUENCE [LARGE SCALE GENOMIC DNA]</scope>
    <source>
        <strain>CLIP80459</strain>
    </source>
</reference>
<keyword id="KW-0067">ATP-binding</keyword>
<keyword id="KW-0418">Kinase</keyword>
<keyword id="KW-0547">Nucleotide-binding</keyword>
<keyword id="KW-0808">Transferase</keyword>
<gene>
    <name evidence="1" type="primary">mcsB</name>
    <name type="ordered locus">Lm4b_00251</name>
</gene>
<accession>C1KYG4</accession>
<comment type="function">
    <text evidence="1">Catalyzes the specific phosphorylation of arginine residues in proteins.</text>
</comment>
<comment type="catalytic activity">
    <reaction evidence="1">
        <text>L-arginyl-[protein] + ATP = N(omega)-phospho-L-arginyl-[protein] + ADP + H(+)</text>
        <dbReference type="Rhea" id="RHEA:43384"/>
        <dbReference type="Rhea" id="RHEA-COMP:10532"/>
        <dbReference type="Rhea" id="RHEA-COMP:10533"/>
        <dbReference type="ChEBI" id="CHEBI:15378"/>
        <dbReference type="ChEBI" id="CHEBI:29965"/>
        <dbReference type="ChEBI" id="CHEBI:30616"/>
        <dbReference type="ChEBI" id="CHEBI:83226"/>
        <dbReference type="ChEBI" id="CHEBI:456216"/>
        <dbReference type="EC" id="2.7.14.1"/>
    </reaction>
</comment>
<comment type="similarity">
    <text evidence="1">Belongs to the ATP:guanido phosphotransferase family.</text>
</comment>